<accession>Q1BUV6</accession>
<dbReference type="EC" id="7.5.2.6" evidence="1"/>
<dbReference type="EMBL" id="CP000378">
    <property type="protein sequence ID" value="ABF76599.1"/>
    <property type="status" value="ALT_INIT"/>
    <property type="molecule type" value="Genomic_DNA"/>
</dbReference>
<dbReference type="SMR" id="Q1BUV6"/>
<dbReference type="HOGENOM" id="CLU_000604_84_3_4"/>
<dbReference type="GO" id="GO:0005886">
    <property type="term" value="C:plasma membrane"/>
    <property type="evidence" value="ECO:0007669"/>
    <property type="project" value="UniProtKB-SubCell"/>
</dbReference>
<dbReference type="GO" id="GO:0015421">
    <property type="term" value="F:ABC-type oligopeptide transporter activity"/>
    <property type="evidence" value="ECO:0007669"/>
    <property type="project" value="TreeGrafter"/>
</dbReference>
<dbReference type="GO" id="GO:0005524">
    <property type="term" value="F:ATP binding"/>
    <property type="evidence" value="ECO:0007669"/>
    <property type="project" value="UniProtKB-KW"/>
</dbReference>
<dbReference type="GO" id="GO:0016887">
    <property type="term" value="F:ATP hydrolysis activity"/>
    <property type="evidence" value="ECO:0007669"/>
    <property type="project" value="InterPro"/>
</dbReference>
<dbReference type="GO" id="GO:0034040">
    <property type="term" value="F:ATPase-coupled lipid transmembrane transporter activity"/>
    <property type="evidence" value="ECO:0007669"/>
    <property type="project" value="InterPro"/>
</dbReference>
<dbReference type="CDD" id="cd18552">
    <property type="entry name" value="ABC_6TM_MsbA_like"/>
    <property type="match status" value="1"/>
</dbReference>
<dbReference type="FunFam" id="3.40.50.300:FF:000221">
    <property type="entry name" value="Multidrug ABC transporter ATP-binding protein"/>
    <property type="match status" value="1"/>
</dbReference>
<dbReference type="Gene3D" id="1.20.1560.10">
    <property type="entry name" value="ABC transporter type 1, transmembrane domain"/>
    <property type="match status" value="1"/>
</dbReference>
<dbReference type="Gene3D" id="3.40.50.300">
    <property type="entry name" value="P-loop containing nucleotide triphosphate hydrolases"/>
    <property type="match status" value="1"/>
</dbReference>
<dbReference type="InterPro" id="IPR003593">
    <property type="entry name" value="AAA+_ATPase"/>
</dbReference>
<dbReference type="InterPro" id="IPR011527">
    <property type="entry name" value="ABC1_TM_dom"/>
</dbReference>
<dbReference type="InterPro" id="IPR036640">
    <property type="entry name" value="ABC1_TM_sf"/>
</dbReference>
<dbReference type="InterPro" id="IPR003439">
    <property type="entry name" value="ABC_transporter-like_ATP-bd"/>
</dbReference>
<dbReference type="InterPro" id="IPR017871">
    <property type="entry name" value="ABC_transporter-like_CS"/>
</dbReference>
<dbReference type="InterPro" id="IPR011917">
    <property type="entry name" value="ABC_transpr_lipidA"/>
</dbReference>
<dbReference type="InterPro" id="IPR027417">
    <property type="entry name" value="P-loop_NTPase"/>
</dbReference>
<dbReference type="InterPro" id="IPR039421">
    <property type="entry name" value="Type_1_exporter"/>
</dbReference>
<dbReference type="NCBIfam" id="TIGR02203">
    <property type="entry name" value="MsbA_lipidA"/>
    <property type="match status" value="1"/>
</dbReference>
<dbReference type="PANTHER" id="PTHR43394:SF1">
    <property type="entry name" value="ATP-BINDING CASSETTE SUB-FAMILY B MEMBER 10, MITOCHONDRIAL"/>
    <property type="match status" value="1"/>
</dbReference>
<dbReference type="PANTHER" id="PTHR43394">
    <property type="entry name" value="ATP-DEPENDENT PERMEASE MDL1, MITOCHONDRIAL"/>
    <property type="match status" value="1"/>
</dbReference>
<dbReference type="Pfam" id="PF00664">
    <property type="entry name" value="ABC_membrane"/>
    <property type="match status" value="1"/>
</dbReference>
<dbReference type="Pfam" id="PF00005">
    <property type="entry name" value="ABC_tran"/>
    <property type="match status" value="1"/>
</dbReference>
<dbReference type="SMART" id="SM00382">
    <property type="entry name" value="AAA"/>
    <property type="match status" value="1"/>
</dbReference>
<dbReference type="SUPFAM" id="SSF90123">
    <property type="entry name" value="ABC transporter transmembrane region"/>
    <property type="match status" value="1"/>
</dbReference>
<dbReference type="SUPFAM" id="SSF52540">
    <property type="entry name" value="P-loop containing nucleoside triphosphate hydrolases"/>
    <property type="match status" value="1"/>
</dbReference>
<dbReference type="PROSITE" id="PS50929">
    <property type="entry name" value="ABC_TM1F"/>
    <property type="match status" value="1"/>
</dbReference>
<dbReference type="PROSITE" id="PS00211">
    <property type="entry name" value="ABC_TRANSPORTER_1"/>
    <property type="match status" value="1"/>
</dbReference>
<dbReference type="PROSITE" id="PS50893">
    <property type="entry name" value="ABC_TRANSPORTER_2"/>
    <property type="match status" value="1"/>
</dbReference>
<dbReference type="PROSITE" id="PS51239">
    <property type="entry name" value="MSBA"/>
    <property type="match status" value="1"/>
</dbReference>
<name>MSBA_BURO1</name>
<feature type="chain" id="PRO_0000271616" description="ATP-dependent lipid A-core flippase">
    <location>
        <begin position="1"/>
        <end position="593"/>
    </location>
</feature>
<feature type="transmembrane region" description="Helical" evidence="1">
    <location>
        <begin position="33"/>
        <end position="53"/>
    </location>
</feature>
<feature type="transmembrane region" description="Helical" evidence="1">
    <location>
        <begin position="75"/>
        <end position="95"/>
    </location>
</feature>
<feature type="transmembrane region" description="Helical" evidence="1">
    <location>
        <begin position="137"/>
        <end position="157"/>
    </location>
</feature>
<feature type="transmembrane region" description="Helical" evidence="1">
    <location>
        <begin position="164"/>
        <end position="184"/>
    </location>
</feature>
<feature type="transmembrane region" description="Helical" evidence="1">
    <location>
        <begin position="262"/>
        <end position="282"/>
    </location>
</feature>
<feature type="transmembrane region" description="Helical" evidence="1">
    <location>
        <begin position="292"/>
        <end position="312"/>
    </location>
</feature>
<feature type="domain" description="ABC transmembrane type-1" evidence="1">
    <location>
        <begin position="37"/>
        <end position="320"/>
    </location>
</feature>
<feature type="domain" description="ABC transporter" evidence="1">
    <location>
        <begin position="352"/>
        <end position="586"/>
    </location>
</feature>
<feature type="binding site" evidence="1">
    <location>
        <begin position="386"/>
        <end position="393"/>
    </location>
    <ligand>
        <name>ATP</name>
        <dbReference type="ChEBI" id="CHEBI:30616"/>
    </ligand>
</feature>
<keyword id="KW-0067">ATP-binding</keyword>
<keyword id="KW-0997">Cell inner membrane</keyword>
<keyword id="KW-1003">Cell membrane</keyword>
<keyword id="KW-0445">Lipid transport</keyword>
<keyword id="KW-0472">Membrane</keyword>
<keyword id="KW-0547">Nucleotide-binding</keyword>
<keyword id="KW-1278">Translocase</keyword>
<keyword id="KW-0812">Transmembrane</keyword>
<keyword id="KW-1133">Transmembrane helix</keyword>
<keyword id="KW-0813">Transport</keyword>
<gene>
    <name evidence="1" type="primary">msbA</name>
    <name type="ordered locus">Bcen_1695</name>
</gene>
<evidence type="ECO:0000255" key="1">
    <source>
        <dbReference type="HAMAP-Rule" id="MF_01703"/>
    </source>
</evidence>
<evidence type="ECO:0000305" key="2"/>
<organism>
    <name type="scientific">Burkholderia orbicola (strain AU 1054)</name>
    <dbReference type="NCBI Taxonomy" id="331271"/>
    <lineage>
        <taxon>Bacteria</taxon>
        <taxon>Pseudomonadati</taxon>
        <taxon>Pseudomonadota</taxon>
        <taxon>Betaproteobacteria</taxon>
        <taxon>Burkholderiales</taxon>
        <taxon>Burkholderiaceae</taxon>
        <taxon>Burkholderia</taxon>
        <taxon>Burkholderia cepacia complex</taxon>
        <taxon>Burkholderia orbicola</taxon>
    </lineage>
</organism>
<sequence>METQNTLRKPMDGTGTSPMTVLKRLWPYIRPLIGIVVLAVVTMGVVAATEAGIPALLKPLLDHGFGSHGSDSAKWYVPIAVIGLALVRGVSQYTSNYLLNYVSNRILLQLRLEMFQRMIHTGASFFQRETASTVINAIVFEVNQILSVLTGVMVTLVRDSLTVIFLLGYLFYLNWRLTLIVAVILPGIGWLVSKINRRLRRLNREHQTLTNELSYIVEETVGGYKVVKVHNGEAYEMDRFTTMSKRLRGYAMRMTISGGLAQPLTQFLASIALAVVITIAVVQSSNDQTTVGGFVAFVTSMLLVISPLKHLIDVNQPLQRGMTAAELIFGLIDEPAEPQGGGRPLSQARGEIEFRAVSFDYGAAERPTLDRISFKVAPGEMIALAGPSGSGKTTLVNLLPRFFDPTDGTILVDGVPVSDYDLHALRSQMAMVSQDVVLFNDTIAANVAYGQTPDRARVQAALEAANLADAVAAMPDGLDTLVGGNGMRLSGGQRQRLAIARAIYKDAPILILDEATSALDSESERHVQAALERLMEGRTTLVIAHRLSTIERADRILVLEAGKIVEEGSHDELLRHGGLYAHLHRIQYQQQAA</sequence>
<comment type="function">
    <text evidence="1">Involved in lipopolysaccharide (LPS) biosynthesis. Translocates lipid A-core from the inner to the outer leaflet of the inner membrane. Transmembrane domains (TMD) form a pore in the inner membrane and the ATP-binding domain (NBD) is responsible for energy generation.</text>
</comment>
<comment type="catalytic activity">
    <reaction evidence="1">
        <text>ATP + H2O + lipid A-core oligosaccharideSide 1 = ADP + phosphate + lipid A-core oligosaccharideSide 2.</text>
        <dbReference type="EC" id="7.5.2.6"/>
    </reaction>
</comment>
<comment type="subunit">
    <text evidence="1">Homodimer.</text>
</comment>
<comment type="subcellular location">
    <subcellularLocation>
        <location evidence="1">Cell inner membrane</location>
        <topology evidence="1">Multi-pass membrane protein</topology>
    </subcellularLocation>
</comment>
<comment type="domain">
    <text evidence="1">In MsbA the ATP-binding domain (NBD) and the transmembrane domain (TMD) are fused.</text>
</comment>
<comment type="similarity">
    <text evidence="1">Belongs to the ABC transporter superfamily. Lipid exporter (TC 3.A.1.106) family.</text>
</comment>
<comment type="sequence caution" evidence="2">
    <conflict type="erroneous initiation">
        <sequence resource="EMBL-CDS" id="ABF76599"/>
    </conflict>
</comment>
<proteinExistence type="inferred from homology"/>
<protein>
    <recommendedName>
        <fullName evidence="1">ATP-dependent lipid A-core flippase</fullName>
        <ecNumber evidence="1">7.5.2.6</ecNumber>
    </recommendedName>
    <alternativeName>
        <fullName evidence="1">Lipid A export ATP-binding/permease protein MsbA</fullName>
    </alternativeName>
</protein>
<reference key="1">
    <citation type="submission" date="2006-05" db="EMBL/GenBank/DDBJ databases">
        <title>Complete sequence of chromosome 1 of Burkholderia cenocepacia AU 1054.</title>
        <authorList>
            <consortium name="US DOE Joint Genome Institute"/>
            <person name="Copeland A."/>
            <person name="Lucas S."/>
            <person name="Lapidus A."/>
            <person name="Barry K."/>
            <person name="Detter J.C."/>
            <person name="Glavina del Rio T."/>
            <person name="Hammon N."/>
            <person name="Israni S."/>
            <person name="Dalin E."/>
            <person name="Tice H."/>
            <person name="Pitluck S."/>
            <person name="Chain P."/>
            <person name="Malfatti S."/>
            <person name="Shin M."/>
            <person name="Vergez L."/>
            <person name="Schmutz J."/>
            <person name="Larimer F."/>
            <person name="Land M."/>
            <person name="Hauser L."/>
            <person name="Kyrpides N."/>
            <person name="Lykidis A."/>
            <person name="LiPuma J.J."/>
            <person name="Konstantinidis K."/>
            <person name="Tiedje J.M."/>
            <person name="Richardson P."/>
        </authorList>
    </citation>
    <scope>NUCLEOTIDE SEQUENCE [LARGE SCALE GENOMIC DNA]</scope>
    <source>
        <strain>AU 1054</strain>
    </source>
</reference>